<evidence type="ECO:0000255" key="1">
    <source>
        <dbReference type="HAMAP-Rule" id="MF_00046"/>
    </source>
</evidence>
<keyword id="KW-0067">ATP-binding</keyword>
<keyword id="KW-0131">Cell cycle</keyword>
<keyword id="KW-0132">Cell division</keyword>
<keyword id="KW-0133">Cell shape</keyword>
<keyword id="KW-0961">Cell wall biogenesis/degradation</keyword>
<keyword id="KW-0963">Cytoplasm</keyword>
<keyword id="KW-0436">Ligase</keyword>
<keyword id="KW-0547">Nucleotide-binding</keyword>
<keyword id="KW-0573">Peptidoglycan synthesis</keyword>
<gene>
    <name evidence="1" type="primary">murC</name>
    <name type="ordered locus">Lferr_0384</name>
</gene>
<reference key="1">
    <citation type="submission" date="2008-08" db="EMBL/GenBank/DDBJ databases">
        <title>Complete sequence of Acidithiobacillus ferrooxidans ATCC 53993.</title>
        <authorList>
            <person name="Lucas S."/>
            <person name="Copeland A."/>
            <person name="Lapidus A."/>
            <person name="Glavina del Rio T."/>
            <person name="Dalin E."/>
            <person name="Tice H."/>
            <person name="Bruce D."/>
            <person name="Goodwin L."/>
            <person name="Pitluck S."/>
            <person name="Sims D."/>
            <person name="Brettin T."/>
            <person name="Detter J.C."/>
            <person name="Han C."/>
            <person name="Kuske C.R."/>
            <person name="Larimer F."/>
            <person name="Land M."/>
            <person name="Hauser L."/>
            <person name="Kyrpides N."/>
            <person name="Lykidis A."/>
            <person name="Borole A.P."/>
        </authorList>
    </citation>
    <scope>NUCLEOTIDE SEQUENCE [LARGE SCALE GENOMIC DNA]</scope>
    <source>
        <strain>ATCC 53993 / BNL-5-31</strain>
    </source>
</reference>
<sequence>MRNWVRQIHMVGIGGSGMRGIAEVLLNLGYAVSGSDLRPGNSTLRLTDLGARIFSGHEAANVRGADVVVISSAIPESNPEVQAARELRIPVIRRAEMLAELMRFKQGIAIAGTHGKTTTTSLVASILGAGGLDPTFVIGGRLKSAGTHAALGSGEYLVAEADESDASFLYLSPVMAVVTNIDADHMETYGGSLDNLRGAFLQFLQRLPFYGLAVLCTDEAVVAGLIPELRTPVLRYGFGADADLQARDVTVQGIGSRFAVWRRVDSDYVHWLDVELGIPGRHNVLNALAAIGIASKVGIPESTIATALADFRGVGRRFELVGTFDGITVVDDYGHHPREIAATIAAARSVWPERPLVVAFQPHRYSRTQALFADFVSSLAAADRVILTDIYSAGEKALPGVTGRALAEAMAAQGMSVRFLPDLLTAPQQIRAELPAGAVLLTLGAGSIASLAAQWPQVFGEDPS</sequence>
<accession>B5ELC2</accession>
<organism>
    <name type="scientific">Acidithiobacillus ferrooxidans (strain ATCC 53993 / BNL-5-31)</name>
    <name type="common">Leptospirillum ferrooxidans (ATCC 53993)</name>
    <dbReference type="NCBI Taxonomy" id="380394"/>
    <lineage>
        <taxon>Bacteria</taxon>
        <taxon>Pseudomonadati</taxon>
        <taxon>Pseudomonadota</taxon>
        <taxon>Acidithiobacillia</taxon>
        <taxon>Acidithiobacillales</taxon>
        <taxon>Acidithiobacillaceae</taxon>
        <taxon>Acidithiobacillus</taxon>
    </lineage>
</organism>
<protein>
    <recommendedName>
        <fullName evidence="1">UDP-N-acetylmuramate--L-alanine ligase</fullName>
        <ecNumber evidence="1">6.3.2.8</ecNumber>
    </recommendedName>
    <alternativeName>
        <fullName evidence="1">UDP-N-acetylmuramoyl-L-alanine synthetase</fullName>
    </alternativeName>
</protein>
<comment type="function">
    <text evidence="1">Cell wall formation.</text>
</comment>
<comment type="catalytic activity">
    <reaction evidence="1">
        <text>UDP-N-acetyl-alpha-D-muramate + L-alanine + ATP = UDP-N-acetyl-alpha-D-muramoyl-L-alanine + ADP + phosphate + H(+)</text>
        <dbReference type="Rhea" id="RHEA:23372"/>
        <dbReference type="ChEBI" id="CHEBI:15378"/>
        <dbReference type="ChEBI" id="CHEBI:30616"/>
        <dbReference type="ChEBI" id="CHEBI:43474"/>
        <dbReference type="ChEBI" id="CHEBI:57972"/>
        <dbReference type="ChEBI" id="CHEBI:70757"/>
        <dbReference type="ChEBI" id="CHEBI:83898"/>
        <dbReference type="ChEBI" id="CHEBI:456216"/>
        <dbReference type="EC" id="6.3.2.8"/>
    </reaction>
</comment>
<comment type="pathway">
    <text evidence="1">Cell wall biogenesis; peptidoglycan biosynthesis.</text>
</comment>
<comment type="subcellular location">
    <subcellularLocation>
        <location evidence="1">Cytoplasm</location>
    </subcellularLocation>
</comment>
<comment type="similarity">
    <text evidence="1">Belongs to the MurCDEF family.</text>
</comment>
<proteinExistence type="inferred from homology"/>
<feature type="chain" id="PRO_1000091072" description="UDP-N-acetylmuramate--L-alanine ligase">
    <location>
        <begin position="1"/>
        <end position="464"/>
    </location>
</feature>
<feature type="binding site" evidence="1">
    <location>
        <begin position="112"/>
        <end position="118"/>
    </location>
    <ligand>
        <name>ATP</name>
        <dbReference type="ChEBI" id="CHEBI:30616"/>
    </ligand>
</feature>
<dbReference type="EC" id="6.3.2.8" evidence="1"/>
<dbReference type="EMBL" id="CP001132">
    <property type="protein sequence ID" value="ACH82638.1"/>
    <property type="molecule type" value="Genomic_DNA"/>
</dbReference>
<dbReference type="RefSeq" id="WP_009567099.1">
    <property type="nucleotide sequence ID" value="NC_011206.1"/>
</dbReference>
<dbReference type="SMR" id="B5ELC2"/>
<dbReference type="GeneID" id="65279590"/>
<dbReference type="KEGG" id="afe:Lferr_0384"/>
<dbReference type="eggNOG" id="COG0773">
    <property type="taxonomic scope" value="Bacteria"/>
</dbReference>
<dbReference type="HOGENOM" id="CLU_028104_2_2_6"/>
<dbReference type="UniPathway" id="UPA00219"/>
<dbReference type="GO" id="GO:0005737">
    <property type="term" value="C:cytoplasm"/>
    <property type="evidence" value="ECO:0007669"/>
    <property type="project" value="UniProtKB-SubCell"/>
</dbReference>
<dbReference type="GO" id="GO:0005524">
    <property type="term" value="F:ATP binding"/>
    <property type="evidence" value="ECO:0007669"/>
    <property type="project" value="UniProtKB-UniRule"/>
</dbReference>
<dbReference type="GO" id="GO:0008763">
    <property type="term" value="F:UDP-N-acetylmuramate-L-alanine ligase activity"/>
    <property type="evidence" value="ECO:0007669"/>
    <property type="project" value="UniProtKB-UniRule"/>
</dbReference>
<dbReference type="GO" id="GO:0051301">
    <property type="term" value="P:cell division"/>
    <property type="evidence" value="ECO:0007669"/>
    <property type="project" value="UniProtKB-KW"/>
</dbReference>
<dbReference type="GO" id="GO:0071555">
    <property type="term" value="P:cell wall organization"/>
    <property type="evidence" value="ECO:0007669"/>
    <property type="project" value="UniProtKB-KW"/>
</dbReference>
<dbReference type="GO" id="GO:0009252">
    <property type="term" value="P:peptidoglycan biosynthetic process"/>
    <property type="evidence" value="ECO:0007669"/>
    <property type="project" value="UniProtKB-UniRule"/>
</dbReference>
<dbReference type="GO" id="GO:0008360">
    <property type="term" value="P:regulation of cell shape"/>
    <property type="evidence" value="ECO:0007669"/>
    <property type="project" value="UniProtKB-KW"/>
</dbReference>
<dbReference type="Gene3D" id="3.90.190.20">
    <property type="entry name" value="Mur ligase, C-terminal domain"/>
    <property type="match status" value="1"/>
</dbReference>
<dbReference type="Gene3D" id="3.40.1190.10">
    <property type="entry name" value="Mur-like, catalytic domain"/>
    <property type="match status" value="1"/>
</dbReference>
<dbReference type="Gene3D" id="3.40.50.720">
    <property type="entry name" value="NAD(P)-binding Rossmann-like Domain"/>
    <property type="match status" value="1"/>
</dbReference>
<dbReference type="HAMAP" id="MF_00046">
    <property type="entry name" value="MurC"/>
    <property type="match status" value="1"/>
</dbReference>
<dbReference type="InterPro" id="IPR036565">
    <property type="entry name" value="Mur-like_cat_sf"/>
</dbReference>
<dbReference type="InterPro" id="IPR004101">
    <property type="entry name" value="Mur_ligase_C"/>
</dbReference>
<dbReference type="InterPro" id="IPR036615">
    <property type="entry name" value="Mur_ligase_C_dom_sf"/>
</dbReference>
<dbReference type="InterPro" id="IPR013221">
    <property type="entry name" value="Mur_ligase_cen"/>
</dbReference>
<dbReference type="InterPro" id="IPR000713">
    <property type="entry name" value="Mur_ligase_N"/>
</dbReference>
<dbReference type="InterPro" id="IPR050061">
    <property type="entry name" value="MurCDEF_pg_biosynth"/>
</dbReference>
<dbReference type="InterPro" id="IPR005758">
    <property type="entry name" value="UDP-N-AcMur_Ala_ligase_MurC"/>
</dbReference>
<dbReference type="NCBIfam" id="TIGR01082">
    <property type="entry name" value="murC"/>
    <property type="match status" value="1"/>
</dbReference>
<dbReference type="PANTHER" id="PTHR43445:SF3">
    <property type="entry name" value="UDP-N-ACETYLMURAMATE--L-ALANINE LIGASE"/>
    <property type="match status" value="1"/>
</dbReference>
<dbReference type="PANTHER" id="PTHR43445">
    <property type="entry name" value="UDP-N-ACETYLMURAMATE--L-ALANINE LIGASE-RELATED"/>
    <property type="match status" value="1"/>
</dbReference>
<dbReference type="Pfam" id="PF01225">
    <property type="entry name" value="Mur_ligase"/>
    <property type="match status" value="1"/>
</dbReference>
<dbReference type="Pfam" id="PF02875">
    <property type="entry name" value="Mur_ligase_C"/>
    <property type="match status" value="1"/>
</dbReference>
<dbReference type="Pfam" id="PF08245">
    <property type="entry name" value="Mur_ligase_M"/>
    <property type="match status" value="1"/>
</dbReference>
<dbReference type="SUPFAM" id="SSF51984">
    <property type="entry name" value="MurCD N-terminal domain"/>
    <property type="match status" value="1"/>
</dbReference>
<dbReference type="SUPFAM" id="SSF53623">
    <property type="entry name" value="MurD-like peptide ligases, catalytic domain"/>
    <property type="match status" value="1"/>
</dbReference>
<dbReference type="SUPFAM" id="SSF53244">
    <property type="entry name" value="MurD-like peptide ligases, peptide-binding domain"/>
    <property type="match status" value="1"/>
</dbReference>
<name>MURC_ACIF5</name>